<keyword id="KW-0963">Cytoplasm</keyword>
<keyword id="KW-0274">FAD</keyword>
<keyword id="KW-0285">Flavoprotein</keyword>
<keyword id="KW-0520">NAD</keyword>
<keyword id="KW-0819">tRNA processing</keyword>
<proteinExistence type="inferred from homology"/>
<dbReference type="EMBL" id="CP001277">
    <property type="protein sequence ID" value="ACQ68880.1"/>
    <property type="molecule type" value="Genomic_DNA"/>
</dbReference>
<dbReference type="RefSeq" id="WP_015874599.1">
    <property type="nucleotide sequence ID" value="NC_012751.1"/>
</dbReference>
<dbReference type="SMR" id="C4K911"/>
<dbReference type="STRING" id="572265.HDEF_2343"/>
<dbReference type="GeneID" id="66261832"/>
<dbReference type="KEGG" id="hde:HDEF_2343"/>
<dbReference type="eggNOG" id="COG0445">
    <property type="taxonomic scope" value="Bacteria"/>
</dbReference>
<dbReference type="HOGENOM" id="CLU_007831_2_2_6"/>
<dbReference type="Proteomes" id="UP000002334">
    <property type="component" value="Chromosome"/>
</dbReference>
<dbReference type="GO" id="GO:0005829">
    <property type="term" value="C:cytosol"/>
    <property type="evidence" value="ECO:0007669"/>
    <property type="project" value="TreeGrafter"/>
</dbReference>
<dbReference type="GO" id="GO:0050660">
    <property type="term" value="F:flavin adenine dinucleotide binding"/>
    <property type="evidence" value="ECO:0007669"/>
    <property type="project" value="UniProtKB-UniRule"/>
</dbReference>
<dbReference type="GO" id="GO:0030488">
    <property type="term" value="P:tRNA methylation"/>
    <property type="evidence" value="ECO:0007669"/>
    <property type="project" value="TreeGrafter"/>
</dbReference>
<dbReference type="GO" id="GO:0002098">
    <property type="term" value="P:tRNA wobble uridine modification"/>
    <property type="evidence" value="ECO:0007669"/>
    <property type="project" value="InterPro"/>
</dbReference>
<dbReference type="FunFam" id="1.10.10.1800:FF:000001">
    <property type="entry name" value="tRNA uridine 5-carboxymethylaminomethyl modification enzyme MnmG"/>
    <property type="match status" value="1"/>
</dbReference>
<dbReference type="FunFam" id="1.10.150.570:FF:000001">
    <property type="entry name" value="tRNA uridine 5-carboxymethylaminomethyl modification enzyme MnmG"/>
    <property type="match status" value="1"/>
</dbReference>
<dbReference type="FunFam" id="3.50.50.60:FF:000002">
    <property type="entry name" value="tRNA uridine 5-carboxymethylaminomethyl modification enzyme MnmG"/>
    <property type="match status" value="1"/>
</dbReference>
<dbReference type="FunFam" id="3.50.50.60:FF:000010">
    <property type="entry name" value="tRNA uridine 5-carboxymethylaminomethyl modification enzyme MnmG"/>
    <property type="match status" value="1"/>
</dbReference>
<dbReference type="Gene3D" id="3.50.50.60">
    <property type="entry name" value="FAD/NAD(P)-binding domain"/>
    <property type="match status" value="2"/>
</dbReference>
<dbReference type="Gene3D" id="1.10.150.570">
    <property type="entry name" value="GidA associated domain, C-terminal subdomain"/>
    <property type="match status" value="1"/>
</dbReference>
<dbReference type="Gene3D" id="1.10.10.1800">
    <property type="entry name" value="tRNA uridine 5-carboxymethylaminomethyl modification enzyme MnmG/GidA"/>
    <property type="match status" value="1"/>
</dbReference>
<dbReference type="HAMAP" id="MF_00129">
    <property type="entry name" value="MnmG_GidA"/>
    <property type="match status" value="1"/>
</dbReference>
<dbReference type="InterPro" id="IPR036188">
    <property type="entry name" value="FAD/NAD-bd_sf"/>
</dbReference>
<dbReference type="InterPro" id="IPR049312">
    <property type="entry name" value="GIDA_C_N"/>
</dbReference>
<dbReference type="InterPro" id="IPR004416">
    <property type="entry name" value="MnmG"/>
</dbReference>
<dbReference type="InterPro" id="IPR002218">
    <property type="entry name" value="MnmG-rel"/>
</dbReference>
<dbReference type="InterPro" id="IPR020595">
    <property type="entry name" value="MnmG-rel_CS"/>
</dbReference>
<dbReference type="InterPro" id="IPR026904">
    <property type="entry name" value="MnmG_C"/>
</dbReference>
<dbReference type="InterPro" id="IPR047001">
    <property type="entry name" value="MnmG_C_subdom"/>
</dbReference>
<dbReference type="InterPro" id="IPR044920">
    <property type="entry name" value="MnmG_C_subdom_sf"/>
</dbReference>
<dbReference type="InterPro" id="IPR040131">
    <property type="entry name" value="MnmG_N"/>
</dbReference>
<dbReference type="NCBIfam" id="TIGR00136">
    <property type="entry name" value="mnmG_gidA"/>
    <property type="match status" value="1"/>
</dbReference>
<dbReference type="PANTHER" id="PTHR11806">
    <property type="entry name" value="GLUCOSE INHIBITED DIVISION PROTEIN A"/>
    <property type="match status" value="1"/>
</dbReference>
<dbReference type="PANTHER" id="PTHR11806:SF0">
    <property type="entry name" value="PROTEIN MTO1 HOMOLOG, MITOCHONDRIAL"/>
    <property type="match status" value="1"/>
</dbReference>
<dbReference type="Pfam" id="PF01134">
    <property type="entry name" value="GIDA"/>
    <property type="match status" value="1"/>
</dbReference>
<dbReference type="Pfam" id="PF21680">
    <property type="entry name" value="GIDA_C_1st"/>
    <property type="match status" value="1"/>
</dbReference>
<dbReference type="Pfam" id="PF13932">
    <property type="entry name" value="SAM_GIDA_C"/>
    <property type="match status" value="1"/>
</dbReference>
<dbReference type="SMART" id="SM01228">
    <property type="entry name" value="GIDA_assoc_3"/>
    <property type="match status" value="1"/>
</dbReference>
<dbReference type="SUPFAM" id="SSF51905">
    <property type="entry name" value="FAD/NAD(P)-binding domain"/>
    <property type="match status" value="1"/>
</dbReference>
<dbReference type="PROSITE" id="PS01280">
    <property type="entry name" value="GIDA_1"/>
    <property type="match status" value="1"/>
</dbReference>
<dbReference type="PROSITE" id="PS01281">
    <property type="entry name" value="GIDA_2"/>
    <property type="match status" value="1"/>
</dbReference>
<protein>
    <recommendedName>
        <fullName evidence="1">tRNA uridine 5-carboxymethylaminomethyl modification enzyme MnmG</fullName>
    </recommendedName>
    <alternativeName>
        <fullName evidence="1">Glucose-inhibited division protein A</fullName>
    </alternativeName>
</protein>
<comment type="function">
    <text evidence="1">NAD-binding protein involved in the addition of a carboxymethylaminomethyl (cmnm) group at the wobble position (U34) of certain tRNAs, forming tRNA-cmnm(5)s(2)U34.</text>
</comment>
<comment type="cofactor">
    <cofactor evidence="1">
        <name>FAD</name>
        <dbReference type="ChEBI" id="CHEBI:57692"/>
    </cofactor>
</comment>
<comment type="subunit">
    <text evidence="1">Homodimer. Heterotetramer of two MnmE and two MnmG subunits.</text>
</comment>
<comment type="subcellular location">
    <subcellularLocation>
        <location evidence="1">Cytoplasm</location>
    </subcellularLocation>
</comment>
<comment type="similarity">
    <text evidence="1">Belongs to the MnmG family.</text>
</comment>
<feature type="chain" id="PRO_1000203162" description="tRNA uridine 5-carboxymethylaminomethyl modification enzyme MnmG">
    <location>
        <begin position="1"/>
        <end position="627"/>
    </location>
</feature>
<feature type="binding site" evidence="1">
    <location>
        <begin position="13"/>
        <end position="18"/>
    </location>
    <ligand>
        <name>FAD</name>
        <dbReference type="ChEBI" id="CHEBI:57692"/>
    </ligand>
</feature>
<feature type="binding site" evidence="1">
    <location>
        <position position="125"/>
    </location>
    <ligand>
        <name>FAD</name>
        <dbReference type="ChEBI" id="CHEBI:57692"/>
    </ligand>
</feature>
<feature type="binding site" evidence="1">
    <location>
        <position position="180"/>
    </location>
    <ligand>
        <name>FAD</name>
        <dbReference type="ChEBI" id="CHEBI:57692"/>
    </ligand>
</feature>
<feature type="binding site" evidence="1">
    <location>
        <begin position="273"/>
        <end position="287"/>
    </location>
    <ligand>
        <name>NAD(+)</name>
        <dbReference type="ChEBI" id="CHEBI:57540"/>
    </ligand>
</feature>
<feature type="binding site" evidence="1">
    <location>
        <position position="370"/>
    </location>
    <ligand>
        <name>FAD</name>
        <dbReference type="ChEBI" id="CHEBI:57692"/>
    </ligand>
</feature>
<organism>
    <name type="scientific">Hamiltonella defensa subsp. Acyrthosiphon pisum (strain 5AT)</name>
    <dbReference type="NCBI Taxonomy" id="572265"/>
    <lineage>
        <taxon>Bacteria</taxon>
        <taxon>Pseudomonadati</taxon>
        <taxon>Pseudomonadota</taxon>
        <taxon>Gammaproteobacteria</taxon>
        <taxon>Enterobacterales</taxon>
        <taxon>Enterobacteriaceae</taxon>
        <taxon>aphid secondary symbionts</taxon>
        <taxon>Candidatus Hamiltonella</taxon>
    </lineage>
</organism>
<sequence>MFYPDQFDVIVIGGGHSGTEAAMASARMGCKTLLLTHNIDTLGQLSCNPAIGGIGKGQLVKEIDALGGLMGMAADKASIQSRILNASKGPAVKSTRVQLDRTVYRKVIRSALENQTNLSIFQQPVDDLILKNDLVVGAVTKMGLKFHAKSIVLTVGTFLDGKIHLGLENYSAGRAGDTASISLASQLRKLPLRIGRLKTGTPPRIDARSINFKNLKIQLGDTPLPLFSFLGRQHPPLTQKPCHITYTNEKTHEIIQKNLERSPMYRGIIDGIGPRYCPSIEDKIIRFSDRSAHQIFLEPEGLTSNEIYPNGISTSLPFDVQLKIVRSIQGMKNAFIVRPGYAIEYDYFDPRDLKPTLESKHIQGLFFAGQINGTTGYEEAAAQGLLAGLNAGRLARGEEGWFPLRNQAYIGVLVDDLTTLGTQEPYRMFTSRAEYRLLLREDNADLRLTEIGYQLGLVDENRWCRFNQKVELIEQEKQRLRSIWIKPNSDNQIDQIIKSPLSRETNGEDLLRRPEVNYSLLTSLKPFLPSLENNEAGMQVEIQIKYEGYIVRQKEEIAKQLRNENTLLPLSFDYSLISGLSNEVVSKLNDHKPISLGQASRISGITPAAISILLVWLKKQGLLRRSA</sequence>
<accession>C4K911</accession>
<reference key="1">
    <citation type="journal article" date="2009" name="Proc. Natl. Acad. Sci. U.S.A.">
        <title>Hamiltonella defensa, genome evolution of protective bacterial endosymbiont from pathogenic ancestors.</title>
        <authorList>
            <person name="Degnan P.H."/>
            <person name="Yu Y."/>
            <person name="Sisneros N."/>
            <person name="Wing R.A."/>
            <person name="Moran N.A."/>
        </authorList>
    </citation>
    <scope>NUCLEOTIDE SEQUENCE [LARGE SCALE GENOMIC DNA]</scope>
    <source>
        <strain>5AT</strain>
    </source>
</reference>
<gene>
    <name evidence="1" type="primary">mnmG</name>
    <name evidence="1" type="synonym">gidA</name>
    <name type="ordered locus">HDEF_2343</name>
</gene>
<evidence type="ECO:0000255" key="1">
    <source>
        <dbReference type="HAMAP-Rule" id="MF_00129"/>
    </source>
</evidence>
<name>MNMG_HAMD5</name>